<name>YNSG_SCHPO</name>
<gene>
    <name type="ORF">SPBC18H10.16</name>
</gene>
<keyword id="KW-0325">Glycoprotein</keyword>
<keyword id="KW-0472">Membrane</keyword>
<keyword id="KW-0597">Phosphoprotein</keyword>
<keyword id="KW-1185">Reference proteome</keyword>
<keyword id="KW-0812">Transmembrane</keyword>
<keyword id="KW-1133">Transmembrane helix</keyword>
<keyword id="KW-0813">Transport</keyword>
<evidence type="ECO:0000250" key="1">
    <source>
        <dbReference type="UniProtKB" id="P38329"/>
    </source>
</evidence>
<evidence type="ECO:0000255" key="2"/>
<evidence type="ECO:0000256" key="3">
    <source>
        <dbReference type="SAM" id="MobiDB-lite"/>
    </source>
</evidence>
<evidence type="ECO:0000269" key="4">
    <source>
    </source>
</evidence>
<evidence type="ECO:0000312" key="5">
    <source>
        <dbReference type="EMBL" id="CAA18413.2"/>
    </source>
</evidence>
<organism>
    <name type="scientific">Schizosaccharomyces pombe (strain 972 / ATCC 24843)</name>
    <name type="common">Fission yeast</name>
    <dbReference type="NCBI Taxonomy" id="284812"/>
    <lineage>
        <taxon>Eukaryota</taxon>
        <taxon>Fungi</taxon>
        <taxon>Dikarya</taxon>
        <taxon>Ascomycota</taxon>
        <taxon>Taphrinomycotina</taxon>
        <taxon>Schizosaccharomycetes</taxon>
        <taxon>Schizosaccharomycetales</taxon>
        <taxon>Schizosaccharomycetaceae</taxon>
        <taxon>Schizosaccharomyces</taxon>
    </lineage>
</organism>
<sequence length="1050" mass="118132">MARLLTKSSQVFDFLADRLSVRKSRRFWETQENLESSTPLLQEPQQSYRSNSFNELPPLSRSVTFAENEQPNEAVKLGTFEGCFIPTTLNVLSILLYLRFPWIIGEAGVLKTLLMLFISYAVGIFTSLSISAICTNGMVRGGGAYYAVSRSIGPELGGSIGLIFYVGQILNTGMNISGFVEPIISIFGKESGTISQFLPEGYWWVFLYTTCVLAMCCILCCLGSAIFAKASNALFVVIILSTISIPISSIFVHPFKDPSLLVHFTGLKWSTLMKNLASAYTENEKGTGYESFKSTFGVFFPATAGLLAGASMSGDLKAPSRSIPKGTISSQATTFLLYLLVILCVGASVTRTGLLLDMDVMEHISLHPLFIISGILSSGAFSSFMGIFGAAKLLQAIARDDLIPGMFFFAKGSSYDDIPYVAIGVTYLITQISLFWDINMLSSMITMTFLLTFGFINLSCFLLRISSTPNFRPTFRYFNRRTTLVGTILSFGVMFYVDRLNAFISFLIAGILVVVIYFTCPPKNWGDVSQGIIYHQLRKYLLQTNKARENIKFWRPQILLLINNPNRSENVIRFCNSLKKGSLYILGHVIVSDDFQASMDDLRKQQRLWHQFVLDRGIKAFVELTIAPDEVWGIRGLISSAGLGGIRPNIAVLTFINTNYRRHRIYSGSSFSLENTSEESESDSKKEFVEHDILPVKWVQILEDMLVGSVDVMVTNGFDRLNWPKRKGEKQYIDMFPIHRISGVGSEVNESTPTFATNFETYTMVFQLSWILHTASDWKQGCRLRLITLVEFENEIEAERESMHQMLETFRIKADVVVLCLAAMNLDAYRYIVKNEHVRPSKSSELENLLKDDSWWQEEKKRRGNTVDSLGPIRFPRRMSGYNFRSASFDKSAPPLSVPLSFRLGPHMHSVKSFETESSFGNRSLSPKQENRRTYSDSTIESSLMPNVVREDSSSDRLAPKKKIGRDYSKEKLTFNDLSSRSQYIIMNEIVLKHTKNTSVLFTVLPAPLADTHKSFRKSEEYVDDLLIFMEGLPPCALIHSKSLTITTAL</sequence>
<protein>
    <recommendedName>
        <fullName>Uncharacterized transporter C18H10.16</fullName>
    </recommendedName>
</protein>
<accession>O60146</accession>
<proteinExistence type="evidence at protein level"/>
<comment type="subcellular location">
    <subcellularLocation>
        <location evidence="2">Membrane</location>
        <topology evidence="2">Multi-pass membrane protein</topology>
    </subcellularLocation>
</comment>
<comment type="similarity">
    <text evidence="2">Belongs to the SLC12A transporter family.</text>
</comment>
<dbReference type="EMBL" id="CU329671">
    <property type="protein sequence ID" value="CAA18413.2"/>
    <property type="molecule type" value="Genomic_DNA"/>
</dbReference>
<dbReference type="PIR" id="T39780">
    <property type="entry name" value="T39780"/>
</dbReference>
<dbReference type="RefSeq" id="NP_595740.1">
    <property type="nucleotide sequence ID" value="NM_001021638.2"/>
</dbReference>
<dbReference type="SMR" id="O60146"/>
<dbReference type="BioGRID" id="277348">
    <property type="interactions" value="11"/>
</dbReference>
<dbReference type="FunCoup" id="O60146">
    <property type="interactions" value="60"/>
</dbReference>
<dbReference type="STRING" id="284812.O60146"/>
<dbReference type="iPTMnet" id="O60146"/>
<dbReference type="PaxDb" id="4896-SPBC18H10.16.1"/>
<dbReference type="EnsemblFungi" id="SPBC18H10.16.1">
    <property type="protein sequence ID" value="SPBC18H10.16.1:pep"/>
    <property type="gene ID" value="SPBC18H10.16"/>
</dbReference>
<dbReference type="PomBase" id="SPBC18H10.16"/>
<dbReference type="VEuPathDB" id="FungiDB:SPBC18H10.16"/>
<dbReference type="eggNOG" id="KOG1288">
    <property type="taxonomic scope" value="Eukaryota"/>
</dbReference>
<dbReference type="HOGENOM" id="CLU_001883_4_0_1"/>
<dbReference type="InParanoid" id="O60146"/>
<dbReference type="OMA" id="NIKYWRP"/>
<dbReference type="PhylomeDB" id="O60146"/>
<dbReference type="PRO" id="PR:O60146"/>
<dbReference type="Proteomes" id="UP000002485">
    <property type="component" value="Chromosome II"/>
</dbReference>
<dbReference type="GO" id="GO:0005774">
    <property type="term" value="C:vacuolar membrane"/>
    <property type="evidence" value="ECO:0000318"/>
    <property type="project" value="GO_Central"/>
</dbReference>
<dbReference type="GO" id="GO:0015379">
    <property type="term" value="F:potassium:chloride symporter activity"/>
    <property type="evidence" value="ECO:0000318"/>
    <property type="project" value="GO_Central"/>
</dbReference>
<dbReference type="GO" id="GO:0006884">
    <property type="term" value="P:cell volume homeostasis"/>
    <property type="evidence" value="ECO:0000318"/>
    <property type="project" value="GO_Central"/>
</dbReference>
<dbReference type="GO" id="GO:0055064">
    <property type="term" value="P:chloride ion homeostasis"/>
    <property type="evidence" value="ECO:0000318"/>
    <property type="project" value="GO_Central"/>
</dbReference>
<dbReference type="GO" id="GO:1902476">
    <property type="term" value="P:chloride transmembrane transport"/>
    <property type="evidence" value="ECO:0000318"/>
    <property type="project" value="GO_Central"/>
</dbReference>
<dbReference type="GO" id="GO:0055075">
    <property type="term" value="P:potassium ion homeostasis"/>
    <property type="evidence" value="ECO:0000318"/>
    <property type="project" value="GO_Central"/>
</dbReference>
<dbReference type="GO" id="GO:0034486">
    <property type="term" value="P:vacuolar transmembrane transport"/>
    <property type="evidence" value="ECO:0000318"/>
    <property type="project" value="GO_Central"/>
</dbReference>
<dbReference type="FunFam" id="1.20.1740.10:FF:000013">
    <property type="entry name" value="Solute carrier family 12 member"/>
    <property type="match status" value="1"/>
</dbReference>
<dbReference type="Gene3D" id="1.20.1740.10">
    <property type="entry name" value="Amino acid/polyamine transporter I"/>
    <property type="match status" value="1"/>
</dbReference>
<dbReference type="InterPro" id="IPR004841">
    <property type="entry name" value="AA-permease/SLC12A_dom"/>
</dbReference>
<dbReference type="InterPro" id="IPR004842">
    <property type="entry name" value="SLC12A_fam"/>
</dbReference>
<dbReference type="PANTHER" id="PTHR11827:SF72">
    <property type="entry name" value="GH08340P"/>
    <property type="match status" value="1"/>
</dbReference>
<dbReference type="PANTHER" id="PTHR11827">
    <property type="entry name" value="SOLUTE CARRIER FAMILY 12, CATION COTRANSPORTERS"/>
    <property type="match status" value="1"/>
</dbReference>
<dbReference type="Pfam" id="PF00324">
    <property type="entry name" value="AA_permease"/>
    <property type="match status" value="1"/>
</dbReference>
<reference evidence="5" key="1">
    <citation type="journal article" date="2002" name="Nature">
        <title>The genome sequence of Schizosaccharomyces pombe.</title>
        <authorList>
            <person name="Wood V."/>
            <person name="Gwilliam R."/>
            <person name="Rajandream M.A."/>
            <person name="Lyne M.H."/>
            <person name="Lyne R."/>
            <person name="Stewart A."/>
            <person name="Sgouros J.G."/>
            <person name="Peat N."/>
            <person name="Hayles J."/>
            <person name="Baker S.G."/>
            <person name="Basham D."/>
            <person name="Bowman S."/>
            <person name="Brooks K."/>
            <person name="Brown D."/>
            <person name="Brown S."/>
            <person name="Chillingworth T."/>
            <person name="Churcher C.M."/>
            <person name="Collins M."/>
            <person name="Connor R."/>
            <person name="Cronin A."/>
            <person name="Davis P."/>
            <person name="Feltwell T."/>
            <person name="Fraser A."/>
            <person name="Gentles S."/>
            <person name="Goble A."/>
            <person name="Hamlin N."/>
            <person name="Harris D.E."/>
            <person name="Hidalgo J."/>
            <person name="Hodgson G."/>
            <person name="Holroyd S."/>
            <person name="Hornsby T."/>
            <person name="Howarth S."/>
            <person name="Huckle E.J."/>
            <person name="Hunt S."/>
            <person name="Jagels K."/>
            <person name="James K.D."/>
            <person name="Jones L."/>
            <person name="Jones M."/>
            <person name="Leather S."/>
            <person name="McDonald S."/>
            <person name="McLean J."/>
            <person name="Mooney P."/>
            <person name="Moule S."/>
            <person name="Mungall K.L."/>
            <person name="Murphy L.D."/>
            <person name="Niblett D."/>
            <person name="Odell C."/>
            <person name="Oliver K."/>
            <person name="O'Neil S."/>
            <person name="Pearson D."/>
            <person name="Quail M.A."/>
            <person name="Rabbinowitsch E."/>
            <person name="Rutherford K.M."/>
            <person name="Rutter S."/>
            <person name="Saunders D."/>
            <person name="Seeger K."/>
            <person name="Sharp S."/>
            <person name="Skelton J."/>
            <person name="Simmonds M.N."/>
            <person name="Squares R."/>
            <person name="Squares S."/>
            <person name="Stevens K."/>
            <person name="Taylor K."/>
            <person name="Taylor R.G."/>
            <person name="Tivey A."/>
            <person name="Walsh S.V."/>
            <person name="Warren T."/>
            <person name="Whitehead S."/>
            <person name="Woodward J.R."/>
            <person name="Volckaert G."/>
            <person name="Aert R."/>
            <person name="Robben J."/>
            <person name="Grymonprez B."/>
            <person name="Weltjens I."/>
            <person name="Vanstreels E."/>
            <person name="Rieger M."/>
            <person name="Schaefer M."/>
            <person name="Mueller-Auer S."/>
            <person name="Gabel C."/>
            <person name="Fuchs M."/>
            <person name="Duesterhoeft A."/>
            <person name="Fritzc C."/>
            <person name="Holzer E."/>
            <person name="Moestl D."/>
            <person name="Hilbert H."/>
            <person name="Borzym K."/>
            <person name="Langer I."/>
            <person name="Beck A."/>
            <person name="Lehrach H."/>
            <person name="Reinhardt R."/>
            <person name="Pohl T.M."/>
            <person name="Eger P."/>
            <person name="Zimmermann W."/>
            <person name="Wedler H."/>
            <person name="Wambutt R."/>
            <person name="Purnelle B."/>
            <person name="Goffeau A."/>
            <person name="Cadieu E."/>
            <person name="Dreano S."/>
            <person name="Gloux S."/>
            <person name="Lelaure V."/>
            <person name="Mottier S."/>
            <person name="Galibert F."/>
            <person name="Aves S.J."/>
            <person name="Xiang Z."/>
            <person name="Hunt C."/>
            <person name="Moore K."/>
            <person name="Hurst S.M."/>
            <person name="Lucas M."/>
            <person name="Rochet M."/>
            <person name="Gaillardin C."/>
            <person name="Tallada V.A."/>
            <person name="Garzon A."/>
            <person name="Thode G."/>
            <person name="Daga R.R."/>
            <person name="Cruzado L."/>
            <person name="Jimenez J."/>
            <person name="Sanchez M."/>
            <person name="del Rey F."/>
            <person name="Benito J."/>
            <person name="Dominguez A."/>
            <person name="Revuelta J.L."/>
            <person name="Moreno S."/>
            <person name="Armstrong J."/>
            <person name="Forsburg S.L."/>
            <person name="Cerutti L."/>
            <person name="Lowe T."/>
            <person name="McCombie W.R."/>
            <person name="Paulsen I."/>
            <person name="Potashkin J."/>
            <person name="Shpakovski G.V."/>
            <person name="Ussery D."/>
            <person name="Barrell B.G."/>
            <person name="Nurse P."/>
        </authorList>
    </citation>
    <scope>NUCLEOTIDE SEQUENCE [LARGE SCALE GENOMIC DNA]</scope>
    <source>
        <strain>972 / ATCC 24843</strain>
    </source>
</reference>
<reference key="2">
    <citation type="journal article" date="2008" name="J. Proteome Res.">
        <title>Phosphoproteome analysis of fission yeast.</title>
        <authorList>
            <person name="Wilson-Grady J.T."/>
            <person name="Villen J."/>
            <person name="Gygi S.P."/>
        </authorList>
    </citation>
    <scope>PHOSPHORYLATION [LARGE SCALE ANALYSIS] AT SER-9; SER-60; THR-64; SER-270; THR-271; SER-901; SER-936 AND THR-939</scope>
    <scope>IDENTIFICATION BY MASS SPECTROMETRY</scope>
</reference>
<feature type="chain" id="PRO_0000310954" description="Uncharacterized transporter C18H10.16">
    <location>
        <begin position="1"/>
        <end position="1050"/>
    </location>
</feature>
<feature type="topological domain" description="Cytoplasmic" evidence="1 2">
    <location>
        <begin position="1"/>
        <end position="83"/>
    </location>
</feature>
<feature type="transmembrane region" description="Helical" evidence="2">
    <location>
        <begin position="84"/>
        <end position="104"/>
    </location>
</feature>
<feature type="topological domain" description="Extracellular" evidence="1 2">
    <location>
        <begin position="105"/>
        <end position="112"/>
    </location>
</feature>
<feature type="transmembrane region" description="Helical" evidence="2">
    <location>
        <begin position="113"/>
        <end position="133"/>
    </location>
</feature>
<feature type="topological domain" description="Cytoplasmic" evidence="1 2">
    <location>
        <begin position="134"/>
        <end position="146"/>
    </location>
</feature>
<feature type="transmembrane region" description="Helical" evidence="2">
    <location>
        <begin position="147"/>
        <end position="169"/>
    </location>
</feature>
<feature type="topological domain" description="Extracellular" evidence="1 2">
    <location>
        <begin position="170"/>
        <end position="202"/>
    </location>
</feature>
<feature type="transmembrane region" description="Helical" evidence="2">
    <location>
        <begin position="203"/>
        <end position="223"/>
    </location>
</feature>
<feature type="topological domain" description="Cytoplasmic" evidence="1 2">
    <location>
        <begin position="224"/>
        <end position="232"/>
    </location>
</feature>
<feature type="transmembrane region" description="Helical" evidence="2">
    <location>
        <begin position="233"/>
        <end position="253"/>
    </location>
</feature>
<feature type="topological domain" description="Extracellular" evidence="1 2">
    <location>
        <begin position="254"/>
        <end position="295"/>
    </location>
</feature>
<feature type="transmembrane region" description="Helical" evidence="2">
    <location>
        <begin position="296"/>
        <end position="316"/>
    </location>
</feature>
<feature type="topological domain" description="Cytoplasmic" evidence="1 2">
    <location>
        <begin position="317"/>
        <end position="334"/>
    </location>
</feature>
<feature type="transmembrane region" description="Helical" evidence="2">
    <location>
        <begin position="335"/>
        <end position="355"/>
    </location>
</feature>
<feature type="topological domain" description="Extracellular" evidence="1 2">
    <location>
        <begin position="356"/>
        <end position="368"/>
    </location>
</feature>
<feature type="transmembrane region" description="Helical" evidence="2">
    <location>
        <begin position="369"/>
        <end position="389"/>
    </location>
</feature>
<feature type="topological domain" description="Cytoplasmic" evidence="1 2">
    <location>
        <begin position="390"/>
        <end position="417"/>
    </location>
</feature>
<feature type="transmembrane region" description="Helical" evidence="2">
    <location>
        <begin position="418"/>
        <end position="438"/>
    </location>
</feature>
<feature type="topological domain" description="Extracellular" evidence="1 2">
    <location>
        <begin position="439"/>
        <end position="442"/>
    </location>
</feature>
<feature type="transmembrane region" description="Helical" evidence="2">
    <location>
        <begin position="443"/>
        <end position="463"/>
    </location>
</feature>
<feature type="topological domain" description="Cytoplasmic" evidence="1 2">
    <location>
        <begin position="464"/>
        <end position="480"/>
    </location>
</feature>
<feature type="transmembrane region" description="Helical" evidence="2">
    <location>
        <begin position="481"/>
        <end position="497"/>
    </location>
</feature>
<feature type="topological domain" description="Extracellular" evidence="1 2">
    <location>
        <begin position="498"/>
        <end position="499"/>
    </location>
</feature>
<feature type="transmembrane region" description="Helical" evidence="2">
    <location>
        <begin position="500"/>
        <end position="520"/>
    </location>
</feature>
<feature type="topological domain" description="Cytoplasmic" evidence="1 2">
    <location>
        <begin position="521"/>
        <end position="1050"/>
    </location>
</feature>
<feature type="region of interest" description="Disordered" evidence="3">
    <location>
        <begin position="915"/>
        <end position="943"/>
    </location>
</feature>
<feature type="compositionally biased region" description="Polar residues" evidence="3">
    <location>
        <begin position="916"/>
        <end position="928"/>
    </location>
</feature>
<feature type="modified residue" description="Phosphoserine" evidence="4">
    <location>
        <position position="9"/>
    </location>
</feature>
<feature type="modified residue" description="Phosphoserine" evidence="4">
    <location>
        <position position="60"/>
    </location>
</feature>
<feature type="modified residue" description="Phosphothreonine" evidence="4">
    <location>
        <position position="64"/>
    </location>
</feature>
<feature type="modified residue" description="Phosphoserine" evidence="4">
    <location>
        <position position="270"/>
    </location>
</feature>
<feature type="modified residue" description="Phosphothreonine" evidence="4">
    <location>
        <position position="271"/>
    </location>
</feature>
<feature type="modified residue" description="Phosphoserine" evidence="4">
    <location>
        <position position="901"/>
    </location>
</feature>
<feature type="modified residue" description="Phosphoserine" evidence="4">
    <location>
        <position position="936"/>
    </location>
</feature>
<feature type="modified residue" description="Phosphothreonine" evidence="4">
    <location>
        <position position="939"/>
    </location>
</feature>
<feature type="glycosylation site" description="N-linked (GlcNAc...) asparagine" evidence="2">
    <location>
        <position position="175"/>
    </location>
</feature>